<evidence type="ECO:0000255" key="1"/>
<evidence type="ECO:0000269" key="2">
    <source>
    </source>
</evidence>
<evidence type="ECO:0000269" key="3">
    <source>
    </source>
</evidence>
<evidence type="ECO:0000269" key="4">
    <source>
    </source>
</evidence>
<evidence type="ECO:0000269" key="5">
    <source>
    </source>
</evidence>
<evidence type="ECO:0000269" key="6">
    <source>
    </source>
</evidence>
<evidence type="ECO:0000303" key="7">
    <source>
    </source>
</evidence>
<evidence type="ECO:0000305" key="8"/>
<evidence type="ECO:0000305" key="9">
    <source>
    </source>
</evidence>
<evidence type="ECO:0000305" key="10">
    <source>
    </source>
</evidence>
<proteinExistence type="evidence at protein level"/>
<feature type="transit peptide" description="Mitochondrion" evidence="1">
    <location>
        <begin position="1"/>
        <end position="19"/>
    </location>
</feature>
<feature type="chain" id="PRO_0000030479" description="Large ribosomal subunit protein uL1m">
    <location>
        <begin position="20"/>
        <end position="285"/>
    </location>
</feature>
<gene>
    <name type="primary">MRPL1</name>
    <name type="ordered locus">YDR116C</name>
    <name type="ORF">YD9727.11C</name>
</gene>
<sequence length="285" mass="30996">MLSVVAIPKICVTGPARRCFFHTAKKLYADDYKPAAMSSNAPSLTKDQAKKRELKRLVQRKAEAKRPATASPLYMPVTKALRYLRAAEVGRPQSQQTINLTTLVVGERGTAPLSGSVTFPKPLRYIKIAAFTNDESKLEELREKYPNHLIGGADLVAKIKSGEISVDFDKAFATPDIVPALQSQVARILGPRGVLPSVKKGTVSDDISSLLQESLGSMPFRQRGNSISIGVGKCYFTDREILQNIISARAAFKTAVDNQKSKKPNILSKTTLSSTHGPGIVIDFA</sequence>
<name>RM01_YEAST</name>
<protein>
    <recommendedName>
        <fullName evidence="7">Large ribosomal subunit protein uL1m</fullName>
    </recommendedName>
    <alternativeName>
        <fullName>54S ribosomal protein L1, mitochondrial</fullName>
    </alternativeName>
</protein>
<accession>Q04599</accession>
<accession>D6VSA1</accession>
<reference key="1">
    <citation type="journal article" date="1997" name="Nature">
        <title>The nucleotide sequence of Saccharomyces cerevisiae chromosome IV.</title>
        <authorList>
            <person name="Jacq C."/>
            <person name="Alt-Moerbe J."/>
            <person name="Andre B."/>
            <person name="Arnold W."/>
            <person name="Bahr A."/>
            <person name="Ballesta J.P.G."/>
            <person name="Bargues M."/>
            <person name="Baron L."/>
            <person name="Becker A."/>
            <person name="Biteau N."/>
            <person name="Bloecker H."/>
            <person name="Blugeon C."/>
            <person name="Boskovic J."/>
            <person name="Brandt P."/>
            <person name="Brueckner M."/>
            <person name="Buitrago M.J."/>
            <person name="Coster F."/>
            <person name="Delaveau T."/>
            <person name="del Rey F."/>
            <person name="Dujon B."/>
            <person name="Eide L.G."/>
            <person name="Garcia-Cantalejo J.M."/>
            <person name="Goffeau A."/>
            <person name="Gomez-Peris A."/>
            <person name="Granotier C."/>
            <person name="Hanemann V."/>
            <person name="Hankeln T."/>
            <person name="Hoheisel J.D."/>
            <person name="Jaeger W."/>
            <person name="Jimenez A."/>
            <person name="Jonniaux J.-L."/>
            <person name="Kraemer C."/>
            <person name="Kuester H."/>
            <person name="Laamanen P."/>
            <person name="Legros Y."/>
            <person name="Louis E.J."/>
            <person name="Moeller-Rieker S."/>
            <person name="Monnet A."/>
            <person name="Moro M."/>
            <person name="Mueller-Auer S."/>
            <person name="Nussbaumer B."/>
            <person name="Paricio N."/>
            <person name="Paulin L."/>
            <person name="Perea J."/>
            <person name="Perez-Alonso M."/>
            <person name="Perez-Ortin J.E."/>
            <person name="Pohl T.M."/>
            <person name="Prydz H."/>
            <person name="Purnelle B."/>
            <person name="Rasmussen S.W."/>
            <person name="Remacha M.A."/>
            <person name="Revuelta J.L."/>
            <person name="Rieger M."/>
            <person name="Salom D."/>
            <person name="Saluz H.P."/>
            <person name="Saiz J.E."/>
            <person name="Saren A.-M."/>
            <person name="Schaefer M."/>
            <person name="Scharfe M."/>
            <person name="Schmidt E.R."/>
            <person name="Schneider C."/>
            <person name="Scholler P."/>
            <person name="Schwarz S."/>
            <person name="Soler-Mira A."/>
            <person name="Urrestarazu L.A."/>
            <person name="Verhasselt P."/>
            <person name="Vissers S."/>
            <person name="Voet M."/>
            <person name="Volckaert G."/>
            <person name="Wagner G."/>
            <person name="Wambutt R."/>
            <person name="Wedler E."/>
            <person name="Wedler H."/>
            <person name="Woelfl S."/>
            <person name="Harris D.E."/>
            <person name="Bowman S."/>
            <person name="Brown D."/>
            <person name="Churcher C.M."/>
            <person name="Connor R."/>
            <person name="Dedman K."/>
            <person name="Gentles S."/>
            <person name="Hamlin N."/>
            <person name="Hunt S."/>
            <person name="Jones L."/>
            <person name="McDonald S."/>
            <person name="Murphy L.D."/>
            <person name="Niblett D."/>
            <person name="Odell C."/>
            <person name="Oliver K."/>
            <person name="Rajandream M.A."/>
            <person name="Richards C."/>
            <person name="Shore L."/>
            <person name="Walsh S.V."/>
            <person name="Barrell B.G."/>
            <person name="Dietrich F.S."/>
            <person name="Mulligan J.T."/>
            <person name="Allen E."/>
            <person name="Araujo R."/>
            <person name="Aviles E."/>
            <person name="Berno A."/>
            <person name="Carpenter J."/>
            <person name="Chen E."/>
            <person name="Cherry J.M."/>
            <person name="Chung E."/>
            <person name="Duncan M."/>
            <person name="Hunicke-Smith S."/>
            <person name="Hyman R.W."/>
            <person name="Komp C."/>
            <person name="Lashkari D."/>
            <person name="Lew H."/>
            <person name="Lin D."/>
            <person name="Mosedale D."/>
            <person name="Nakahara K."/>
            <person name="Namath A."/>
            <person name="Oefner P."/>
            <person name="Oh C."/>
            <person name="Petel F.X."/>
            <person name="Roberts D."/>
            <person name="Schramm S."/>
            <person name="Schroeder M."/>
            <person name="Shogren T."/>
            <person name="Shroff N."/>
            <person name="Winant A."/>
            <person name="Yelton M.A."/>
            <person name="Botstein D."/>
            <person name="Davis R.W."/>
            <person name="Johnston M."/>
            <person name="Andrews S."/>
            <person name="Brinkman R."/>
            <person name="Cooper J."/>
            <person name="Ding H."/>
            <person name="Du Z."/>
            <person name="Favello A."/>
            <person name="Fulton L."/>
            <person name="Gattung S."/>
            <person name="Greco T."/>
            <person name="Hallsworth K."/>
            <person name="Hawkins J."/>
            <person name="Hillier L.W."/>
            <person name="Jier M."/>
            <person name="Johnson D."/>
            <person name="Johnston L."/>
            <person name="Kirsten J."/>
            <person name="Kucaba T."/>
            <person name="Langston Y."/>
            <person name="Latreille P."/>
            <person name="Le T."/>
            <person name="Mardis E."/>
            <person name="Menezes S."/>
            <person name="Miller N."/>
            <person name="Nhan M."/>
            <person name="Pauley A."/>
            <person name="Peluso D."/>
            <person name="Rifkin L."/>
            <person name="Riles L."/>
            <person name="Taich A."/>
            <person name="Trevaskis E."/>
            <person name="Vignati D."/>
            <person name="Wilcox L."/>
            <person name="Wohldman P."/>
            <person name="Vaudin M."/>
            <person name="Wilson R."/>
            <person name="Waterston R."/>
            <person name="Albermann K."/>
            <person name="Hani J."/>
            <person name="Heumann K."/>
            <person name="Kleine K."/>
            <person name="Mewes H.-W."/>
            <person name="Zollner A."/>
            <person name="Zaccaria P."/>
        </authorList>
    </citation>
    <scope>NUCLEOTIDE SEQUENCE [LARGE SCALE GENOMIC DNA]</scope>
    <source>
        <strain>ATCC 204508 / S288c</strain>
    </source>
</reference>
<reference key="2">
    <citation type="journal article" date="2014" name="G3 (Bethesda)">
        <title>The reference genome sequence of Saccharomyces cerevisiae: Then and now.</title>
        <authorList>
            <person name="Engel S.R."/>
            <person name="Dietrich F.S."/>
            <person name="Fisk D.G."/>
            <person name="Binkley G."/>
            <person name="Balakrishnan R."/>
            <person name="Costanzo M.C."/>
            <person name="Dwight S.S."/>
            <person name="Hitz B.C."/>
            <person name="Karra K."/>
            <person name="Nash R.S."/>
            <person name="Weng S."/>
            <person name="Wong E.D."/>
            <person name="Lloyd P."/>
            <person name="Skrzypek M.S."/>
            <person name="Miyasato S.R."/>
            <person name="Simison M."/>
            <person name="Cherry J.M."/>
        </authorList>
    </citation>
    <scope>GENOME REANNOTATION</scope>
    <source>
        <strain>ATCC 204508 / S288c</strain>
    </source>
</reference>
<reference key="3">
    <citation type="journal article" date="2007" name="Genome Res.">
        <title>Approaching a complete repository of sequence-verified protein-encoding clones for Saccharomyces cerevisiae.</title>
        <authorList>
            <person name="Hu Y."/>
            <person name="Rolfs A."/>
            <person name="Bhullar B."/>
            <person name="Murthy T.V.S."/>
            <person name="Zhu C."/>
            <person name="Berger M.F."/>
            <person name="Camargo A.A."/>
            <person name="Kelley F."/>
            <person name="McCarron S."/>
            <person name="Jepson D."/>
            <person name="Richardson A."/>
            <person name="Raphael J."/>
            <person name="Moreira D."/>
            <person name="Taycher E."/>
            <person name="Zuo D."/>
            <person name="Mohr S."/>
            <person name="Kane M.F."/>
            <person name="Williamson J."/>
            <person name="Simpson A.J.G."/>
            <person name="Bulyk M.L."/>
            <person name="Harlow E."/>
            <person name="Marsischky G."/>
            <person name="Kolodner R.D."/>
            <person name="LaBaer J."/>
        </authorList>
    </citation>
    <scope>NUCLEOTIDE SEQUENCE [GENOMIC DNA]</scope>
    <source>
        <strain>ATCC 204508 / S288c</strain>
    </source>
</reference>
<reference key="4">
    <citation type="journal article" date="2002" name="Eur. J. Biochem.">
        <title>Tag-mediated isolation of yeast mitochondrial ribosome and mass spectrometric identification of its new components.</title>
        <authorList>
            <person name="Gan X."/>
            <person name="Kitakawa M."/>
            <person name="Yoshino K."/>
            <person name="Oshiro N."/>
            <person name="Yonezawa K."/>
            <person name="Isono K."/>
        </authorList>
    </citation>
    <scope>IDENTIFICATION IN THE MITOCHONDRIAL RIBOSOMAL LARGE COMPLEX</scope>
    <scope>IDENTIFICATION BY MASS SPECTROMETRY</scope>
</reference>
<reference key="5">
    <citation type="journal article" date="2003" name="Nature">
        <title>Global analysis of protein localization in budding yeast.</title>
        <authorList>
            <person name="Huh W.-K."/>
            <person name="Falvo J.V."/>
            <person name="Gerke L.C."/>
            <person name="Carroll A.S."/>
            <person name="Howson R.W."/>
            <person name="Weissman J.S."/>
            <person name="O'Shea E.K."/>
        </authorList>
    </citation>
    <scope>SUBCELLULAR LOCATION [LARGE SCALE ANALYSIS]</scope>
</reference>
<reference key="6">
    <citation type="journal article" date="2003" name="Nature">
        <title>Global analysis of protein expression in yeast.</title>
        <authorList>
            <person name="Ghaemmaghami S."/>
            <person name="Huh W.-K."/>
            <person name="Bower K."/>
            <person name="Howson R.W."/>
            <person name="Belle A."/>
            <person name="Dephoure N."/>
            <person name="O'Shea E.K."/>
            <person name="Weissman J.S."/>
        </authorList>
    </citation>
    <scope>LEVEL OF PROTEIN EXPRESSION [LARGE SCALE ANALYSIS]</scope>
</reference>
<reference key="7">
    <citation type="journal article" date="2003" name="Proc. Natl. Acad. Sci. U.S.A.">
        <title>The proteome of Saccharomyces cerevisiae mitochondria.</title>
        <authorList>
            <person name="Sickmann A."/>
            <person name="Reinders J."/>
            <person name="Wagner Y."/>
            <person name="Joppich C."/>
            <person name="Zahedi R.P."/>
            <person name="Meyer H.E."/>
            <person name="Schoenfisch B."/>
            <person name="Perschil I."/>
            <person name="Chacinska A."/>
            <person name="Guiard B."/>
            <person name="Rehling P."/>
            <person name="Pfanner N."/>
            <person name="Meisinger C."/>
        </authorList>
    </citation>
    <scope>SUBCELLULAR LOCATION [LARGE SCALE ANALYSIS]</scope>
    <source>
        <strain>ATCC 76625 / YPH499</strain>
    </source>
</reference>
<reference key="8">
    <citation type="journal article" date="2014" name="Science">
        <title>Structure of the yeast mitochondrial large ribosomal subunit.</title>
        <authorList>
            <person name="Amunts A."/>
            <person name="Brown A."/>
            <person name="Bai X.C."/>
            <person name="Llacer J.L."/>
            <person name="Hussain T."/>
            <person name="Emsley P."/>
            <person name="Long F."/>
            <person name="Murshudov G."/>
            <person name="Scheres S.H."/>
            <person name="Ramakrishnan V."/>
        </authorList>
    </citation>
    <scope>NOMENCLATURE</scope>
</reference>
<reference key="9">
    <citation type="journal article" date="2015" name="Nat. Commun.">
        <title>Organization of the mitochondrial translation machinery studied in situ by cryoelectron tomography.</title>
        <authorList>
            <person name="Pfeffer S."/>
            <person name="Woellhaf M.W."/>
            <person name="Herrmann J.M."/>
            <person name="Forster F."/>
        </authorList>
    </citation>
    <scope>SUBCELLULAR LOCATION</scope>
</reference>
<comment type="function">
    <text evidence="9 10">Component of the mitochondrial ribosome (mitoribosome), a dedicated translation machinery responsible for the synthesis of mitochondrial genome-encoded proteins, including at least some of the essential transmembrane subunits of the mitochondrial respiratory chain. The mitoribosomes are attached to the mitochondrial inner membrane and translation products are cotranslationally integrated into the membrane.</text>
</comment>
<comment type="subunit">
    <text evidence="2">Component of the mitochondrial large ribosomal subunit (mt-LSU). Mature yeast 74S mitochondrial ribosomes consist of a small (37S) and a large (54S) subunit. The 37S small subunit contains a 15S ribosomal RNA (15S mt-rRNA) and 34 different proteins. The 54S large subunit contains a 21S rRNA (21S mt-rRNA) and 46 different proteins.</text>
</comment>
<comment type="subcellular location">
    <subcellularLocation>
        <location evidence="3 5">Mitochondrion</location>
    </subcellularLocation>
    <text evidence="6">Mitoribosomes are tethered to the mitochondrial inner membrane and spatially aligned with the membrane insertion machinery through two distinct membrane contact sites, formed by the 21S rRNA expansion segment 96-ES1 and the inner membrane protein MBA1.</text>
</comment>
<comment type="miscellaneous">
    <text evidence="4">Present with 7000 molecules/cell in log phase SD medium.</text>
</comment>
<comment type="similarity">
    <text evidence="8">Belongs to the universal ribosomal protein uL1 family.</text>
</comment>
<organism>
    <name type="scientific">Saccharomyces cerevisiae (strain ATCC 204508 / S288c)</name>
    <name type="common">Baker's yeast</name>
    <dbReference type="NCBI Taxonomy" id="559292"/>
    <lineage>
        <taxon>Eukaryota</taxon>
        <taxon>Fungi</taxon>
        <taxon>Dikarya</taxon>
        <taxon>Ascomycota</taxon>
        <taxon>Saccharomycotina</taxon>
        <taxon>Saccharomycetes</taxon>
        <taxon>Saccharomycetales</taxon>
        <taxon>Saccharomycetaceae</taxon>
        <taxon>Saccharomyces</taxon>
    </lineage>
</organism>
<keyword id="KW-0496">Mitochondrion</keyword>
<keyword id="KW-1185">Reference proteome</keyword>
<keyword id="KW-0687">Ribonucleoprotein</keyword>
<keyword id="KW-0689">Ribosomal protein</keyword>
<keyword id="KW-0809">Transit peptide</keyword>
<dbReference type="EMBL" id="Z48758">
    <property type="protein sequence ID" value="CAA88669.1"/>
    <property type="molecule type" value="Genomic_DNA"/>
</dbReference>
<dbReference type="EMBL" id="AY557683">
    <property type="protein sequence ID" value="AAS56009.1"/>
    <property type="molecule type" value="Genomic_DNA"/>
</dbReference>
<dbReference type="EMBL" id="BK006938">
    <property type="protein sequence ID" value="DAA11961.1"/>
    <property type="molecule type" value="Genomic_DNA"/>
</dbReference>
<dbReference type="PIR" id="S52681">
    <property type="entry name" value="S52681"/>
</dbReference>
<dbReference type="RefSeq" id="NP_010401.1">
    <property type="nucleotide sequence ID" value="NM_001180424.1"/>
</dbReference>
<dbReference type="SMR" id="Q04599"/>
<dbReference type="BioGRID" id="32172">
    <property type="interactions" value="433"/>
</dbReference>
<dbReference type="ComplexPortal" id="CPX-1602">
    <property type="entry name" value="54S mitochondrial large ribosomal subunit"/>
</dbReference>
<dbReference type="DIP" id="DIP-5223N"/>
<dbReference type="FunCoup" id="Q04599">
    <property type="interactions" value="407"/>
</dbReference>
<dbReference type="IntAct" id="Q04599">
    <property type="interactions" value="66"/>
</dbReference>
<dbReference type="MINT" id="Q04599"/>
<dbReference type="STRING" id="4932.YDR116C"/>
<dbReference type="iPTMnet" id="Q04599"/>
<dbReference type="PaxDb" id="4932-YDR116C"/>
<dbReference type="PeptideAtlas" id="Q04599"/>
<dbReference type="EnsemblFungi" id="YDR116C_mRNA">
    <property type="protein sequence ID" value="YDR116C"/>
    <property type="gene ID" value="YDR116C"/>
</dbReference>
<dbReference type="GeneID" id="851694"/>
<dbReference type="KEGG" id="sce:YDR116C"/>
<dbReference type="AGR" id="SGD:S000002523"/>
<dbReference type="SGD" id="S000002523">
    <property type="gene designation" value="MRPL1"/>
</dbReference>
<dbReference type="VEuPathDB" id="FungiDB:YDR116C"/>
<dbReference type="eggNOG" id="KOG1569">
    <property type="taxonomic scope" value="Eukaryota"/>
</dbReference>
<dbReference type="HOGENOM" id="CLU_062853_1_1_1"/>
<dbReference type="InParanoid" id="Q04599"/>
<dbReference type="OMA" id="EFRVDKH"/>
<dbReference type="OrthoDB" id="1747252at2759"/>
<dbReference type="BioCyc" id="YEAST:G3O-29716-MONOMER"/>
<dbReference type="BioGRID-ORCS" id="851694">
    <property type="hits" value="1 hit in 10 CRISPR screens"/>
</dbReference>
<dbReference type="PRO" id="PR:Q04599"/>
<dbReference type="Proteomes" id="UP000002311">
    <property type="component" value="Chromosome IV"/>
</dbReference>
<dbReference type="RNAct" id="Q04599">
    <property type="molecule type" value="protein"/>
</dbReference>
<dbReference type="GO" id="GO:0005743">
    <property type="term" value="C:mitochondrial inner membrane"/>
    <property type="evidence" value="ECO:0000303"/>
    <property type="project" value="ComplexPortal"/>
</dbReference>
<dbReference type="GO" id="GO:0005762">
    <property type="term" value="C:mitochondrial large ribosomal subunit"/>
    <property type="evidence" value="ECO:0000314"/>
    <property type="project" value="SGD"/>
</dbReference>
<dbReference type="GO" id="GO:0005739">
    <property type="term" value="C:mitochondrion"/>
    <property type="evidence" value="ECO:0007005"/>
    <property type="project" value="SGD"/>
</dbReference>
<dbReference type="GO" id="GO:0003723">
    <property type="term" value="F:RNA binding"/>
    <property type="evidence" value="ECO:0007669"/>
    <property type="project" value="InterPro"/>
</dbReference>
<dbReference type="GO" id="GO:0003735">
    <property type="term" value="F:structural constituent of ribosome"/>
    <property type="evidence" value="ECO:0000314"/>
    <property type="project" value="SGD"/>
</dbReference>
<dbReference type="GO" id="GO:0032543">
    <property type="term" value="P:mitochondrial translation"/>
    <property type="evidence" value="ECO:0000303"/>
    <property type="project" value="ComplexPortal"/>
</dbReference>
<dbReference type="CDD" id="cd00403">
    <property type="entry name" value="Ribosomal_L1"/>
    <property type="match status" value="1"/>
</dbReference>
<dbReference type="FunFam" id="3.40.50.790:FF:000001">
    <property type="entry name" value="50S ribosomal protein L1"/>
    <property type="match status" value="1"/>
</dbReference>
<dbReference type="Gene3D" id="3.30.190.20">
    <property type="match status" value="1"/>
</dbReference>
<dbReference type="Gene3D" id="3.40.50.790">
    <property type="match status" value="1"/>
</dbReference>
<dbReference type="InterPro" id="IPR002143">
    <property type="entry name" value="Ribosomal_uL1"/>
</dbReference>
<dbReference type="InterPro" id="IPR023674">
    <property type="entry name" value="Ribosomal_uL1-like"/>
</dbReference>
<dbReference type="InterPro" id="IPR028364">
    <property type="entry name" value="Ribosomal_uL1/biogenesis"/>
</dbReference>
<dbReference type="InterPro" id="IPR016095">
    <property type="entry name" value="Ribosomal_uL1_3-a/b-sand"/>
</dbReference>
<dbReference type="InterPro" id="IPR023673">
    <property type="entry name" value="Ribosomal_uL1_CS"/>
</dbReference>
<dbReference type="InterPro" id="IPR005879">
    <property type="entry name" value="Ribosomal_uL1_mit"/>
</dbReference>
<dbReference type="NCBIfam" id="TIGR01170">
    <property type="entry name" value="rplA_mito"/>
    <property type="match status" value="1"/>
</dbReference>
<dbReference type="PANTHER" id="PTHR36427">
    <property type="entry name" value="54S RIBOSOMAL PROTEIN L1, MITOCHONDRIAL"/>
    <property type="match status" value="1"/>
</dbReference>
<dbReference type="PANTHER" id="PTHR36427:SF3">
    <property type="entry name" value="LARGE RIBOSOMAL SUBUNIT PROTEIN UL1M"/>
    <property type="match status" value="1"/>
</dbReference>
<dbReference type="Pfam" id="PF00687">
    <property type="entry name" value="Ribosomal_L1"/>
    <property type="match status" value="1"/>
</dbReference>
<dbReference type="PIRSF" id="PIRSF002155">
    <property type="entry name" value="Ribosomal_L1"/>
    <property type="match status" value="1"/>
</dbReference>
<dbReference type="SUPFAM" id="SSF56808">
    <property type="entry name" value="Ribosomal protein L1"/>
    <property type="match status" value="1"/>
</dbReference>
<dbReference type="PROSITE" id="PS01199">
    <property type="entry name" value="RIBOSOMAL_L1"/>
    <property type="match status" value="1"/>
</dbReference>